<sequence length="138" mass="15505">MNAVVLFSVLFALACGQVSSFCIPTEYMMYVDRRECAYCLTINTTICAGYCMTRDINGKLFLPKYALSQDVCTYRDFTYRTVEIPGCPHHVAPYFSYPVALSCKCGKCNTDYSDCTHEAVKTNYCTKPQTFYLGGFSG</sequence>
<comment type="function">
    <text>Indispensable for the control of thyroid structure and metabolism.</text>
</comment>
<comment type="subunit">
    <text>Heterodimer of a common alpha chain and a unique beta chain which confers biological specificity to thyrotropin, lutropin, follitropin and gonadotropin.</text>
</comment>
<comment type="subcellular location">
    <subcellularLocation>
        <location>Secreted</location>
    </subcellularLocation>
</comment>
<comment type="similarity">
    <text evidence="3">Belongs to the glycoprotein hormones subunit beta family.</text>
</comment>
<reference key="1">
    <citation type="journal article" date="1984" name="DNA">
        <title>Thyroid hormone decreases thyrotropin subunit mRNA levels in rat anterior pituitary.</title>
        <authorList>
            <person name="Croyle M.L."/>
            <person name="Maurer R.A."/>
        </authorList>
    </citation>
    <scope>NUCLEOTIDE SEQUENCE [MRNA]</scope>
    <source>
        <strain>Holtzman</strain>
    </source>
</reference>
<reference key="2">
    <citation type="journal article" date="1985" name="Biochem. Biophys. Res. Commun.">
        <title>Evidence for a single rat thyrotropin-beta-subunit gene: thyroidectomy increases its mRNA.</title>
        <authorList>
            <person name="Chin W.W."/>
            <person name="Muccini J.A. Jr."/>
            <person name="Shin L."/>
        </authorList>
    </citation>
    <scope>NUCLEOTIDE SEQUENCE [MRNA]</scope>
    <source>
        <strain>Sprague-Dawley</strain>
    </source>
</reference>
<reference key="3">
    <citation type="journal article" date="1986" name="DNA">
        <title>Analysis of the organization and nucleotide sequence of the chromosomal gene for the beta-subunit of rat thyrotropin.</title>
        <authorList>
            <person name="Croyle M.L."/>
            <person name="Bhattacharya A."/>
            <person name="Gordon D.F."/>
            <person name="Maurer R.A."/>
        </authorList>
    </citation>
    <scope>NUCLEOTIDE SEQUENCE [GENOMIC DNA]</scope>
</reference>
<reference key="4">
    <citation type="journal article" date="1987" name="J. Biol. Chem.">
        <title>Isolation and characterization of the rat thyrotropin beta-subunit gene. Differential regulation of two transcriptional start sites by thyroid hormone.</title>
        <authorList>
            <person name="Carr F.E."/>
            <person name="Need L.R."/>
            <person name="Chin W.W."/>
        </authorList>
    </citation>
    <scope>NUCLEOTIDE SEQUENCE [GENOMIC DNA]</scope>
    <source>
        <strain>Sprague-Dawley</strain>
    </source>
</reference>
<reference key="5">
    <citation type="journal article" date="2004" name="Genome Res.">
        <title>The status, quality, and expansion of the NIH full-length cDNA project: the Mammalian Gene Collection (MGC).</title>
        <authorList>
            <consortium name="The MGC Project Team"/>
        </authorList>
    </citation>
    <scope>NUCLEOTIDE SEQUENCE [LARGE SCALE MRNA]</scope>
    <source>
        <tissue>Pituitary</tissue>
    </source>
</reference>
<reference key="6">
    <citation type="journal article" date="1990" name="Zool. Sci.">
        <title>Strain difference in nucleotide sequences of rat glycoprotein hormone subunit cDNAs and gene fragment.</title>
        <authorList>
            <person name="Kato Y."/>
            <person name="Ezashi T."/>
            <person name="Hirai T."/>
            <person name="Kato T."/>
        </authorList>
    </citation>
    <scope>NUCLEOTIDE SEQUENCE [MRNA] OF 40-138</scope>
    <source>
        <strain>Wistar Imamichi</strain>
        <tissue>Pituitary anterior lobe</tissue>
    </source>
</reference>
<feature type="signal peptide">
    <location>
        <begin position="1"/>
        <end position="20"/>
    </location>
</feature>
<feature type="chain" id="PRO_0000011754" description="Thyrotropin subunit beta">
    <location>
        <begin position="21"/>
        <end position="132"/>
    </location>
</feature>
<feature type="propeptide" id="PRO_0000011755">
    <location>
        <begin position="133"/>
        <end position="138"/>
    </location>
</feature>
<feature type="glycosylation site" description="N-linked (GlcNAc...) asparagine" evidence="2">
    <location>
        <position position="43"/>
    </location>
</feature>
<feature type="disulfide bond" evidence="1">
    <location>
        <begin position="22"/>
        <end position="72"/>
    </location>
</feature>
<feature type="disulfide bond" evidence="1">
    <location>
        <begin position="36"/>
        <end position="87"/>
    </location>
</feature>
<feature type="disulfide bond" evidence="1">
    <location>
        <begin position="39"/>
        <end position="125"/>
    </location>
</feature>
<feature type="disulfide bond" evidence="1">
    <location>
        <begin position="47"/>
        <end position="103"/>
    </location>
</feature>
<feature type="disulfide bond" evidence="1">
    <location>
        <begin position="51"/>
        <end position="105"/>
    </location>
</feature>
<feature type="disulfide bond" evidence="1">
    <location>
        <begin position="108"/>
        <end position="115"/>
    </location>
</feature>
<feature type="sequence conflict" description="In Ref. 1; CAA25684." evidence="3" ref="1">
    <original>G</original>
    <variation>E</variation>
    <location>
        <position position="16"/>
    </location>
</feature>
<organism>
    <name type="scientific">Rattus norvegicus</name>
    <name type="common">Rat</name>
    <dbReference type="NCBI Taxonomy" id="10116"/>
    <lineage>
        <taxon>Eukaryota</taxon>
        <taxon>Metazoa</taxon>
        <taxon>Chordata</taxon>
        <taxon>Craniata</taxon>
        <taxon>Vertebrata</taxon>
        <taxon>Euteleostomi</taxon>
        <taxon>Mammalia</taxon>
        <taxon>Eutheria</taxon>
        <taxon>Euarchontoglires</taxon>
        <taxon>Glires</taxon>
        <taxon>Rodentia</taxon>
        <taxon>Myomorpha</taxon>
        <taxon>Muroidea</taxon>
        <taxon>Muridae</taxon>
        <taxon>Murinae</taxon>
        <taxon>Rattus</taxon>
    </lineage>
</organism>
<protein>
    <recommendedName>
        <fullName>Thyrotropin subunit beta</fullName>
    </recommendedName>
    <alternativeName>
        <fullName>Thyroid-stimulating hormone subunit beta</fullName>
        <shortName>TSH-B</shortName>
        <shortName>TSH-beta</shortName>
    </alternativeName>
    <alternativeName>
        <fullName>Thyrotropin beta chain</fullName>
    </alternativeName>
</protein>
<gene>
    <name type="primary">Tshb</name>
</gene>
<proteinExistence type="evidence at transcript level"/>
<dbReference type="EMBL" id="X01454">
    <property type="protein sequence ID" value="CAA25684.1"/>
    <property type="molecule type" value="mRNA"/>
</dbReference>
<dbReference type="EMBL" id="M10902">
    <property type="protein sequence ID" value="AAA42301.1"/>
    <property type="molecule type" value="mRNA"/>
</dbReference>
<dbReference type="EMBL" id="M13897">
    <property type="protein sequence ID" value="AAB59720.1"/>
    <property type="molecule type" value="Genomic_DNA"/>
</dbReference>
<dbReference type="EMBL" id="M14450">
    <property type="protein sequence ID" value="AAA99238.1"/>
    <property type="molecule type" value="Genomic_DNA"/>
</dbReference>
<dbReference type="EMBL" id="BC058488">
    <property type="protein sequence ID" value="AAH58488.1"/>
    <property type="molecule type" value="mRNA"/>
</dbReference>
<dbReference type="EMBL" id="D00578">
    <property type="protein sequence ID" value="BAA00456.1"/>
    <property type="molecule type" value="mRNA"/>
</dbReference>
<dbReference type="PIR" id="A90954">
    <property type="entry name" value="TTRTB"/>
</dbReference>
<dbReference type="RefSeq" id="NP_037248.2">
    <property type="nucleotide sequence ID" value="NM_013116.2"/>
</dbReference>
<dbReference type="SMR" id="P04652"/>
<dbReference type="FunCoup" id="P04652">
    <property type="interactions" value="34"/>
</dbReference>
<dbReference type="STRING" id="10116.ENSRNOP00000022575"/>
<dbReference type="GlyCosmos" id="P04652">
    <property type="glycosylation" value="1 site, No reported glycans"/>
</dbReference>
<dbReference type="GlyGen" id="P04652">
    <property type="glycosylation" value="1 site"/>
</dbReference>
<dbReference type="PaxDb" id="10116-ENSRNOP00000022575"/>
<dbReference type="Ensembl" id="ENSRNOT00000022575.5">
    <property type="protein sequence ID" value="ENSRNOP00000022575.2"/>
    <property type="gene ID" value="ENSRNOG00000016793.5"/>
</dbReference>
<dbReference type="GeneID" id="25653"/>
<dbReference type="KEGG" id="rno:25653"/>
<dbReference type="UCSC" id="RGD:3910">
    <property type="organism name" value="rat"/>
</dbReference>
<dbReference type="AGR" id="RGD:3910"/>
<dbReference type="CTD" id="7252"/>
<dbReference type="RGD" id="3910">
    <property type="gene designation" value="Tshb"/>
</dbReference>
<dbReference type="eggNOG" id="ENOG502S2JW">
    <property type="taxonomic scope" value="Eukaryota"/>
</dbReference>
<dbReference type="GeneTree" id="ENSGT00940000158152"/>
<dbReference type="HOGENOM" id="CLU_126319_0_2_1"/>
<dbReference type="InParanoid" id="P04652"/>
<dbReference type="OMA" id="PTEYMMH"/>
<dbReference type="OrthoDB" id="8866353at2759"/>
<dbReference type="PhylomeDB" id="P04652"/>
<dbReference type="TreeFam" id="TF332940"/>
<dbReference type="Reactome" id="R-RNO-209822">
    <property type="pathway name" value="Glycoprotein hormones"/>
</dbReference>
<dbReference type="Reactome" id="R-RNO-209968">
    <property type="pathway name" value="Thyroxine biosynthesis"/>
</dbReference>
<dbReference type="Reactome" id="R-RNO-375281">
    <property type="pathway name" value="Hormone ligand-binding receptors"/>
</dbReference>
<dbReference type="PRO" id="PR:P04652"/>
<dbReference type="Proteomes" id="UP000002494">
    <property type="component" value="Chromosome 2"/>
</dbReference>
<dbReference type="Bgee" id="ENSRNOG00000016793">
    <property type="expression patterns" value="Expressed in lung and 11 other cell types or tissues"/>
</dbReference>
<dbReference type="ExpressionAtlas" id="P04652">
    <property type="expression patterns" value="baseline and differential"/>
</dbReference>
<dbReference type="GO" id="GO:0005737">
    <property type="term" value="C:cytoplasm"/>
    <property type="evidence" value="ECO:0000266"/>
    <property type="project" value="RGD"/>
</dbReference>
<dbReference type="GO" id="GO:0005615">
    <property type="term" value="C:extracellular space"/>
    <property type="evidence" value="ECO:0000318"/>
    <property type="project" value="GO_Central"/>
</dbReference>
<dbReference type="GO" id="GO:0005179">
    <property type="term" value="F:hormone activity"/>
    <property type="evidence" value="ECO:0000304"/>
    <property type="project" value="RGD"/>
</dbReference>
<dbReference type="GO" id="GO:0007186">
    <property type="term" value="P:G protein-coupled receptor signaling pathway"/>
    <property type="evidence" value="ECO:0000318"/>
    <property type="project" value="GO_Central"/>
</dbReference>
<dbReference type="GO" id="GO:0051592">
    <property type="term" value="P:response to calcium ion"/>
    <property type="evidence" value="ECO:0000270"/>
    <property type="project" value="RGD"/>
</dbReference>
<dbReference type="GO" id="GO:0043627">
    <property type="term" value="P:response to estrogen"/>
    <property type="evidence" value="ECO:0000270"/>
    <property type="project" value="RGD"/>
</dbReference>
<dbReference type="GO" id="GO:0033189">
    <property type="term" value="P:response to vitamin A"/>
    <property type="evidence" value="ECO:0000270"/>
    <property type="project" value="RGD"/>
</dbReference>
<dbReference type="CDD" id="cd00069">
    <property type="entry name" value="GHB_like"/>
    <property type="match status" value="1"/>
</dbReference>
<dbReference type="FunFam" id="2.10.90.10:FF:000007">
    <property type="entry name" value="Luteinizing hormone beta subunit"/>
    <property type="match status" value="1"/>
</dbReference>
<dbReference type="Gene3D" id="2.10.90.10">
    <property type="entry name" value="Cystine-knot cytokines"/>
    <property type="match status" value="1"/>
</dbReference>
<dbReference type="InterPro" id="IPR029034">
    <property type="entry name" value="Cystine-knot_cytokine"/>
</dbReference>
<dbReference type="InterPro" id="IPR006208">
    <property type="entry name" value="Glyco_hormone_CN"/>
</dbReference>
<dbReference type="InterPro" id="IPR001545">
    <property type="entry name" value="Gonadotropin_bsu"/>
</dbReference>
<dbReference type="InterPro" id="IPR018245">
    <property type="entry name" value="Gonadotropin_bsu_CS"/>
</dbReference>
<dbReference type="PANTHER" id="PTHR11515">
    <property type="entry name" value="GLYCOPROTEIN HORMONE BETA CHAIN"/>
    <property type="match status" value="1"/>
</dbReference>
<dbReference type="PANTHER" id="PTHR11515:SF5">
    <property type="entry name" value="THYROTROPIN SUBUNIT BETA"/>
    <property type="match status" value="1"/>
</dbReference>
<dbReference type="Pfam" id="PF00007">
    <property type="entry name" value="Cys_knot"/>
    <property type="match status" value="1"/>
</dbReference>
<dbReference type="SMART" id="SM00068">
    <property type="entry name" value="GHB"/>
    <property type="match status" value="1"/>
</dbReference>
<dbReference type="SUPFAM" id="SSF57501">
    <property type="entry name" value="Cystine-knot cytokines"/>
    <property type="match status" value="1"/>
</dbReference>
<dbReference type="PROSITE" id="PS00261">
    <property type="entry name" value="GLYCO_HORMONE_BETA_1"/>
    <property type="match status" value="1"/>
</dbReference>
<dbReference type="PROSITE" id="PS00689">
    <property type="entry name" value="GLYCO_HORMONE_BETA_2"/>
    <property type="match status" value="1"/>
</dbReference>
<accession>P04652</accession>
<accession>Q6GTA8</accession>
<keyword id="KW-1015">Disulfide bond</keyword>
<keyword id="KW-0325">Glycoprotein</keyword>
<keyword id="KW-0372">Hormone</keyword>
<keyword id="KW-1185">Reference proteome</keyword>
<keyword id="KW-0964">Secreted</keyword>
<keyword id="KW-0732">Signal</keyword>
<name>TSHB_RAT</name>
<evidence type="ECO:0000250" key="1"/>
<evidence type="ECO:0000255" key="2"/>
<evidence type="ECO:0000305" key="3"/>